<organism>
    <name type="scientific">Saccharomyces cerevisiae (strain ATCC 204508 / S288c)</name>
    <name type="common">Baker's yeast</name>
    <dbReference type="NCBI Taxonomy" id="559292"/>
    <lineage>
        <taxon>Eukaryota</taxon>
        <taxon>Fungi</taxon>
        <taxon>Dikarya</taxon>
        <taxon>Ascomycota</taxon>
        <taxon>Saccharomycotina</taxon>
        <taxon>Saccharomycetes</taxon>
        <taxon>Saccharomycetales</taxon>
        <taxon>Saccharomycetaceae</taxon>
        <taxon>Saccharomyces</taxon>
    </lineage>
</organism>
<protein>
    <recommendedName>
        <fullName>Protein PET130</fullName>
    </recommendedName>
</protein>
<comment type="subcellular location">
    <subcellularLocation>
        <location evidence="3">Mitochondrion matrix</location>
    </subcellularLocation>
</comment>
<comment type="disruption phenotype">
    <text evidence="1">Mutants are deficient in mitochondrial protein synthesis.</text>
</comment>
<comment type="miscellaneous">
    <text evidence="2">Present with 721 molecules/cell in log phase SD medium.</text>
</comment>
<keyword id="KW-0496">Mitochondrion</keyword>
<keyword id="KW-1185">Reference proteome</keyword>
<name>PT130_YEAST</name>
<reference key="1">
    <citation type="submission" date="1995-10" db="EMBL/GenBank/DDBJ databases">
        <authorList>
            <person name="Cui Z."/>
            <person name="Mason T."/>
        </authorList>
    </citation>
    <scope>NUCLEOTIDE SEQUENCE [GENOMIC DNA]</scope>
</reference>
<reference key="2">
    <citation type="journal article" date="1996" name="EMBO J.">
        <title>Complete nucleotide sequence of Saccharomyces cerevisiae chromosome X.</title>
        <authorList>
            <person name="Galibert F."/>
            <person name="Alexandraki D."/>
            <person name="Baur A."/>
            <person name="Boles E."/>
            <person name="Chalwatzis N."/>
            <person name="Chuat J.-C."/>
            <person name="Coster F."/>
            <person name="Cziepluch C."/>
            <person name="de Haan M."/>
            <person name="Domdey H."/>
            <person name="Durand P."/>
            <person name="Entian K.-D."/>
            <person name="Gatius M."/>
            <person name="Goffeau A."/>
            <person name="Grivell L.A."/>
            <person name="Hennemann A."/>
            <person name="Herbert C.J."/>
            <person name="Heumann K."/>
            <person name="Hilger F."/>
            <person name="Hollenberg C.P."/>
            <person name="Huang M.-E."/>
            <person name="Jacq C."/>
            <person name="Jauniaux J.-C."/>
            <person name="Katsoulou C."/>
            <person name="Kirchrath L."/>
            <person name="Kleine K."/>
            <person name="Kordes E."/>
            <person name="Koetter P."/>
            <person name="Liebl S."/>
            <person name="Louis E.J."/>
            <person name="Manus V."/>
            <person name="Mewes H.-W."/>
            <person name="Miosga T."/>
            <person name="Obermaier B."/>
            <person name="Perea J."/>
            <person name="Pohl T.M."/>
            <person name="Portetelle D."/>
            <person name="Pujol A."/>
            <person name="Purnelle B."/>
            <person name="Ramezani Rad M."/>
            <person name="Rasmussen S.W."/>
            <person name="Rose M."/>
            <person name="Rossau R."/>
            <person name="Schaaff-Gerstenschlaeger I."/>
            <person name="Smits P.H.M."/>
            <person name="Scarcez T."/>
            <person name="Soriano N."/>
            <person name="To Van D."/>
            <person name="Tzermia M."/>
            <person name="Van Broekhoven A."/>
            <person name="Vandenbol M."/>
            <person name="Wedler H."/>
            <person name="von Wettstein D."/>
            <person name="Wambutt R."/>
            <person name="Zagulski M."/>
            <person name="Zollner A."/>
            <person name="Karpfinger-Hartl L."/>
        </authorList>
    </citation>
    <scope>NUCLEOTIDE SEQUENCE [LARGE SCALE GENOMIC DNA]</scope>
    <source>
        <strain>ATCC 204508 / S288c</strain>
    </source>
</reference>
<reference key="3">
    <citation type="journal article" date="2014" name="G3 (Bethesda)">
        <title>The reference genome sequence of Saccharomyces cerevisiae: Then and now.</title>
        <authorList>
            <person name="Engel S.R."/>
            <person name="Dietrich F.S."/>
            <person name="Fisk D.G."/>
            <person name="Binkley G."/>
            <person name="Balakrishnan R."/>
            <person name="Costanzo M.C."/>
            <person name="Dwight S.S."/>
            <person name="Hitz B.C."/>
            <person name="Karra K."/>
            <person name="Nash R.S."/>
            <person name="Weng S."/>
            <person name="Wong E.D."/>
            <person name="Lloyd P."/>
            <person name="Skrzypek M.S."/>
            <person name="Miyasato S.R."/>
            <person name="Simison M."/>
            <person name="Cherry J.M."/>
        </authorList>
    </citation>
    <scope>GENOME REANNOTATION</scope>
    <source>
        <strain>ATCC 204508 / S288c</strain>
    </source>
</reference>
<reference key="4">
    <citation type="journal article" date="2002" name="Mol. Biol. Cell">
        <title>Genetic basis of mitochondrial function and morphology in Saccharomyces cerevisiae.</title>
        <authorList>
            <person name="Dimmer K.S."/>
            <person name="Fritz S."/>
            <person name="Fuchs F."/>
            <person name="Messerschmitt M."/>
            <person name="Weinbach N."/>
            <person name="Neupert W."/>
            <person name="Westermann B."/>
        </authorList>
    </citation>
    <scope>DISRUPTION PHENOTYPE</scope>
</reference>
<reference key="5">
    <citation type="journal article" date="2003" name="Nature">
        <title>Global analysis of protein expression in yeast.</title>
        <authorList>
            <person name="Ghaemmaghami S."/>
            <person name="Huh W.-K."/>
            <person name="Bower K."/>
            <person name="Howson R.W."/>
            <person name="Belle A."/>
            <person name="Dephoure N."/>
            <person name="O'Shea E.K."/>
            <person name="Weissman J.S."/>
        </authorList>
    </citation>
    <scope>LEVEL OF PROTEIN EXPRESSION [LARGE SCALE ANALYSIS]</scope>
</reference>
<sequence length="347" mass="39813">MKIFSTLLSQKPKGKLVIRPSTTIHSSDPFSKFIVTKNTEPLSLGDLRKSDSGNSAVCLNAENTILSTLTDLQKEEERNWDPVKFVAGKLRGVISPIQAYVTIGKKFSPNSLVYTSRFFQLHYFPEDHFMSCFRKSKPAITVKSNKKFYLNGKVFNKDKEYFNETRISKANEVELSKIQTAMTRLTNRHRNSIPSEFAYLRRDLKLKVKTTFIKEWCKLNGDKAIREYVNLNRSPNINPASMKGKPKKSFLDNLGRSTVGTAKDGYYLYIVSIFPDKDMLGEFNDEVNRSVQKVANLDWDGFLTPKKGTKGKNWVESFNDSINVQTINKILEINKFPFELRREQTEG</sequence>
<accession>P47065</accession>
<accession>D6VWF9</accession>
<dbReference type="EMBL" id="U37712">
    <property type="protein sequence ID" value="AAA79708.1"/>
    <property type="molecule type" value="Genomic_DNA"/>
</dbReference>
<dbReference type="EMBL" id="Z49298">
    <property type="protein sequence ID" value="CAA89313.1"/>
    <property type="molecule type" value="Genomic_DNA"/>
</dbReference>
<dbReference type="EMBL" id="BK006943">
    <property type="protein sequence ID" value="DAA08775.1"/>
    <property type="molecule type" value="Genomic_DNA"/>
</dbReference>
<dbReference type="PIR" id="S56795">
    <property type="entry name" value="S56795"/>
</dbReference>
<dbReference type="RefSeq" id="NP_012511.1">
    <property type="nucleotide sequence ID" value="NM_001181457.1"/>
</dbReference>
<dbReference type="BioGRID" id="33737">
    <property type="interactions" value="147"/>
</dbReference>
<dbReference type="DIP" id="DIP-4590N"/>
<dbReference type="FunCoup" id="P47065">
    <property type="interactions" value="54"/>
</dbReference>
<dbReference type="IntAct" id="P47065">
    <property type="interactions" value="4"/>
</dbReference>
<dbReference type="MINT" id="P47065"/>
<dbReference type="STRING" id="4932.YJL023C"/>
<dbReference type="GlyGen" id="P47065">
    <property type="glycosylation" value="1 site"/>
</dbReference>
<dbReference type="iPTMnet" id="P47065"/>
<dbReference type="PaxDb" id="4932-YJL023C"/>
<dbReference type="PeptideAtlas" id="P47065"/>
<dbReference type="EnsemblFungi" id="YJL023C_mRNA">
    <property type="protein sequence ID" value="YJL023C"/>
    <property type="gene ID" value="YJL023C"/>
</dbReference>
<dbReference type="GeneID" id="853432"/>
<dbReference type="KEGG" id="sce:YJL023C"/>
<dbReference type="AGR" id="SGD:S000003560"/>
<dbReference type="SGD" id="S000003560">
    <property type="gene designation" value="PET130"/>
</dbReference>
<dbReference type="VEuPathDB" id="FungiDB:YJL023C"/>
<dbReference type="eggNOG" id="ENOG502S17D">
    <property type="taxonomic scope" value="Eukaryota"/>
</dbReference>
<dbReference type="HOGENOM" id="CLU_071646_1_0_1"/>
<dbReference type="InParanoid" id="P47065"/>
<dbReference type="OMA" id="CDFFRLL"/>
<dbReference type="OrthoDB" id="4062049at2759"/>
<dbReference type="BioCyc" id="YEAST:G3O-31493-MONOMER"/>
<dbReference type="BioGRID-ORCS" id="853432">
    <property type="hits" value="0 hits in 10 CRISPR screens"/>
</dbReference>
<dbReference type="PRO" id="PR:P47065"/>
<dbReference type="Proteomes" id="UP000002311">
    <property type="component" value="Chromosome X"/>
</dbReference>
<dbReference type="RNAct" id="P47065">
    <property type="molecule type" value="protein"/>
</dbReference>
<dbReference type="GO" id="GO:0099617">
    <property type="term" value="C:matrix side of mitochondrial inner membrane"/>
    <property type="evidence" value="ECO:0000314"/>
    <property type="project" value="SGD"/>
</dbReference>
<dbReference type="GO" id="GO:0005759">
    <property type="term" value="C:mitochondrial matrix"/>
    <property type="evidence" value="ECO:0007669"/>
    <property type="project" value="UniProtKB-SubCell"/>
</dbReference>
<dbReference type="GO" id="GO:0005739">
    <property type="term" value="C:mitochondrion"/>
    <property type="evidence" value="ECO:0007005"/>
    <property type="project" value="SGD"/>
</dbReference>
<dbReference type="GO" id="GO:0097745">
    <property type="term" value="P:mitochondrial tRNA 5'-end processing"/>
    <property type="evidence" value="ECO:0000315"/>
    <property type="project" value="SGD"/>
</dbReference>
<gene>
    <name type="primary">PET130</name>
    <name type="ordered locus">YJL023C</name>
    <name type="ORF">J1282</name>
</gene>
<proteinExistence type="evidence at protein level"/>
<feature type="chain" id="PRO_0000097083" description="Protein PET130">
    <location>
        <begin position="1"/>
        <end position="347"/>
    </location>
</feature>
<evidence type="ECO:0000269" key="1">
    <source>
    </source>
</evidence>
<evidence type="ECO:0000269" key="2">
    <source>
    </source>
</evidence>
<evidence type="ECO:0000305" key="3"/>